<dbReference type="EC" id="2.4.1.132" evidence="1"/>
<dbReference type="EC" id="2.4.1.257" evidence="1"/>
<dbReference type="EMBL" id="AB015055">
    <property type="protein sequence ID" value="BAA34297.1"/>
    <property type="molecule type" value="mRNA"/>
</dbReference>
<dbReference type="EMBL" id="AB015054">
    <property type="protein sequence ID" value="BAA34296.1"/>
    <property type="molecule type" value="Genomic_DNA"/>
</dbReference>
<dbReference type="SMR" id="O94738"/>
<dbReference type="CAZy" id="GT4">
    <property type="family name" value="Glycosyltransferase Family 4"/>
</dbReference>
<dbReference type="GlyCosmos" id="O94738">
    <property type="glycosylation" value="1 site, No reported glycans"/>
</dbReference>
<dbReference type="UniPathway" id="UPA00378"/>
<dbReference type="GO" id="GO:0005789">
    <property type="term" value="C:endoplasmic reticulum membrane"/>
    <property type="evidence" value="ECO:0007669"/>
    <property type="project" value="UniProtKB-SubCell"/>
</dbReference>
<dbReference type="GO" id="GO:0004378">
    <property type="term" value="F:GDP-Man:Man1GlcNAc2-PP-Dol alpha-1,3-mannosyltransferase activity"/>
    <property type="evidence" value="ECO:0007669"/>
    <property type="project" value="UniProtKB-EC"/>
</dbReference>
<dbReference type="GO" id="GO:0102704">
    <property type="term" value="F:GDP-Man:Man2GlcNAc2-PP-dolichol alpha-1,6-mannosyltransferase activity"/>
    <property type="evidence" value="ECO:0007669"/>
    <property type="project" value="UniProtKB-EC"/>
</dbReference>
<dbReference type="GO" id="GO:0006486">
    <property type="term" value="P:protein glycosylation"/>
    <property type="evidence" value="ECO:0007669"/>
    <property type="project" value="UniProtKB-UniPathway"/>
</dbReference>
<dbReference type="CDD" id="cd03805">
    <property type="entry name" value="GT4_ALG2-like"/>
    <property type="match status" value="1"/>
</dbReference>
<dbReference type="Gene3D" id="3.40.50.2000">
    <property type="entry name" value="Glycogen Phosphorylase B"/>
    <property type="match status" value="2"/>
</dbReference>
<dbReference type="InterPro" id="IPR027054">
    <property type="entry name" value="ALG2"/>
</dbReference>
<dbReference type="InterPro" id="IPR001296">
    <property type="entry name" value="Glyco_trans_1"/>
</dbReference>
<dbReference type="InterPro" id="IPR028098">
    <property type="entry name" value="Glyco_trans_4-like_N"/>
</dbReference>
<dbReference type="PANTHER" id="PTHR45918">
    <property type="entry name" value="ALPHA-1,3/1,6-MANNOSYLTRANSFERASE ALG2"/>
    <property type="match status" value="1"/>
</dbReference>
<dbReference type="PANTHER" id="PTHR45918:SF1">
    <property type="entry name" value="ALPHA-1,3_1,6-MANNOSYLTRANSFERASE ALG2"/>
    <property type="match status" value="1"/>
</dbReference>
<dbReference type="Pfam" id="PF13439">
    <property type="entry name" value="Glyco_transf_4"/>
    <property type="match status" value="1"/>
</dbReference>
<dbReference type="Pfam" id="PF00534">
    <property type="entry name" value="Glycos_transf_1"/>
    <property type="match status" value="1"/>
</dbReference>
<dbReference type="SUPFAM" id="SSF53756">
    <property type="entry name" value="UDP-Glycosyltransferase/glycogen phosphorylase"/>
    <property type="match status" value="1"/>
</dbReference>
<organism>
    <name type="scientific">Rhizomucor pusillus</name>
    <dbReference type="NCBI Taxonomy" id="4840"/>
    <lineage>
        <taxon>Eukaryota</taxon>
        <taxon>Fungi</taxon>
        <taxon>Fungi incertae sedis</taxon>
        <taxon>Mucoromycota</taxon>
        <taxon>Mucoromycotina</taxon>
        <taxon>Mucoromycetes</taxon>
        <taxon>Mucorales</taxon>
        <taxon>Lichtheimiaceae</taxon>
        <taxon>Rhizomucor</taxon>
    </lineage>
</organism>
<feature type="chain" id="PRO_0000080268" description="Alpha-1,3/1,6-mannosyltransferase ALG2">
    <location>
        <begin position="1"/>
        <end position="455"/>
    </location>
</feature>
<feature type="transmembrane region" description="Helical" evidence="2">
    <location>
        <begin position="73"/>
        <end position="95"/>
    </location>
</feature>
<feature type="transmembrane region" description="Helical" evidence="2">
    <location>
        <begin position="434"/>
        <end position="453"/>
    </location>
</feature>
<feature type="glycosylation site" description="N-linked (GlcNAc...) asparagine" evidence="2">
    <location>
        <position position="138"/>
    </location>
</feature>
<feature type="mutagenesis site" description="Temperature-sensitive phenotype." evidence="3">
    <original>G</original>
    <variation>R</variation>
    <location>
        <position position="368"/>
    </location>
</feature>
<name>ALG2_RHIPU</name>
<sequence>MTSKSLNVAFIHPDLGIGGAERLVVDAAVGIQKKGHQVIFYTSHHDPNHCFEETRDGTLKVQVRGDWLPRTIFGRFYILCAILRQFVLVASLILWERHSYDIFFVDQLSACVPLLKWFTTAKILFYCHFPDKLLTQRNSTIKKLYRAPVDKMEELTTGMSDLIAVNSGFTAGMFKKSFPSVHQTPQILYPPINFDAYDRPVDRNDPTVKILETDKRVLLSINRFERKKNVELALRAFAALKIKNMVPKDVFANYRLVLAGGYDKRVRENVEYLEELDQLATEEFGLQTFTIHPSSAAADVPADAQVVFLCSFNDAQRTFLLDQAKLLLYTPSNEHFGITPVEGMYASVPVIAVNTGGPVETVKNKETGLLLPSDPDVWAEGIRDFIIEKYNGKQMGQHGRQHVQSKFSLPAFADRLEAMMIELETSTPDQSSSGAVYLLGAIGVLFACIIYCIKQ</sequence>
<gene>
    <name type="primary">ALG2</name>
</gene>
<protein>
    <recommendedName>
        <fullName>Alpha-1,3/1,6-mannosyltransferase ALG2</fullName>
        <ecNumber evidence="1">2.4.1.132</ecNumber>
        <ecNumber evidence="1">2.4.1.257</ecNumber>
    </recommendedName>
    <alternativeName>
        <fullName>GDP-Man:Man(1)GlcNAc(2)-PP-Dol alpha-1,3-mannosyltransferase</fullName>
    </alternativeName>
    <alternativeName>
        <fullName>GDP-Man:Man(1)GlcNAc(2)-PP-dolichol mannosyltransferase</fullName>
    </alternativeName>
    <alternativeName>
        <fullName>GDP-Man:Man(2)GlcNAc(2)-PP-Dol alpha-1,6-mannosyltransferase</fullName>
    </alternativeName>
</protein>
<evidence type="ECO:0000250" key="1">
    <source>
        <dbReference type="UniProtKB" id="P43636"/>
    </source>
</evidence>
<evidence type="ECO:0000255" key="2"/>
<evidence type="ECO:0000269" key="3">
    <source>
    </source>
</evidence>
<evidence type="ECO:0000305" key="4"/>
<accession>O94738</accession>
<proteinExistence type="evidence at protein level"/>
<reference key="1">
    <citation type="journal article" date="1998" name="Gene">
        <title>Characterization of alg2 encoding a mannosyltransferase in the zygomycete fungus Rhizomucor pusillus.</title>
        <authorList>
            <person name="Yamazaki H."/>
            <person name="Shiraishi N."/>
            <person name="Takeuchi K."/>
            <person name="Ohnishi Y."/>
            <person name="Horinouchi S."/>
        </authorList>
    </citation>
    <scope>NUCLEOTIDE SEQUENCE [GENOMIC DNA / MRNA]</scope>
    <scope>MUTAGENESIS OF GLY-368</scope>
</reference>
<comment type="function">
    <text evidence="1">Mannosylates Man(2)GlcNAc(2)-dolichol diphosphate and Man(1)GlcNAc(2)-dolichol diphosphate to form Man(3)GlcNAc(2)-dolichol diphosphate.</text>
</comment>
<comment type="catalytic activity">
    <reaction evidence="1">
        <text>a beta-D-Man-(1-&gt;4)-beta-D-GlcNAc-(1-&gt;4)-alpha-D-GlcNAc-diphospho-di-trans,poly-cis-dolichol + GDP-alpha-D-mannose = an alpha-D-Man-(1-&gt;3)-beta-D-Man-(1-&gt;4)-beta-D-GlcNAc-(1-&gt;4)-alpha-D-GlcNAc-diphospho-di-trans,poly-cis-dolichol + GDP + H(+)</text>
        <dbReference type="Rhea" id="RHEA:29515"/>
        <dbReference type="Rhea" id="RHEA-COMP:19511"/>
        <dbReference type="Rhea" id="RHEA-COMP:19513"/>
        <dbReference type="ChEBI" id="CHEBI:15378"/>
        <dbReference type="ChEBI" id="CHEBI:57527"/>
        <dbReference type="ChEBI" id="CHEBI:58189"/>
        <dbReference type="ChEBI" id="CHEBI:58472"/>
        <dbReference type="ChEBI" id="CHEBI:132510"/>
        <dbReference type="EC" id="2.4.1.132"/>
    </reaction>
    <physiologicalReaction direction="left-to-right" evidence="1">
        <dbReference type="Rhea" id="RHEA:29516"/>
    </physiologicalReaction>
</comment>
<comment type="catalytic activity">
    <reaction evidence="1">
        <text>an alpha-D-Man-(1-&gt;3)-beta-D-Man-(1-&gt;4)-beta-D-GlcNAc-(1-&gt;4)-alpha-D-GlcNAc-diphospho-di-trans,poly-cis-dolichol + GDP-alpha-D-mannose = an alpha-D-Man-(1-&gt;3)-[alpha-D-Man-(1-&gt;6)]-beta-D-Man-(1-&gt;4)-beta-D-GlcNAc-(1-&gt;4)-alpha-D-GlcNAc-diphospho-di-trans,poly-cis-dolichol + GDP + H(+)</text>
        <dbReference type="Rhea" id="RHEA:29519"/>
        <dbReference type="Rhea" id="RHEA-COMP:19513"/>
        <dbReference type="Rhea" id="RHEA-COMP:19515"/>
        <dbReference type="ChEBI" id="CHEBI:15378"/>
        <dbReference type="ChEBI" id="CHEBI:57527"/>
        <dbReference type="ChEBI" id="CHEBI:58189"/>
        <dbReference type="ChEBI" id="CHEBI:132510"/>
        <dbReference type="ChEBI" id="CHEBI:132511"/>
        <dbReference type="EC" id="2.4.1.257"/>
    </reaction>
    <physiologicalReaction direction="left-to-right" evidence="1">
        <dbReference type="Rhea" id="RHEA:29520"/>
    </physiologicalReaction>
</comment>
<comment type="pathway">
    <text evidence="1">Protein modification; protein glycosylation.</text>
</comment>
<comment type="subcellular location">
    <subcellularLocation>
        <location evidence="1">Endoplasmic reticulum membrane</location>
        <topology evidence="2">Multi-pass membrane protein</topology>
    </subcellularLocation>
</comment>
<comment type="similarity">
    <text evidence="4">Belongs to the glycosyltransferase group 1 family. Glycosyltransferase 4 subfamily.</text>
</comment>
<keyword id="KW-0256">Endoplasmic reticulum</keyword>
<keyword id="KW-0325">Glycoprotein</keyword>
<keyword id="KW-0328">Glycosyltransferase</keyword>
<keyword id="KW-0472">Membrane</keyword>
<keyword id="KW-0808">Transferase</keyword>
<keyword id="KW-0812">Transmembrane</keyword>
<keyword id="KW-1133">Transmembrane helix</keyword>